<sequence length="299" mass="33358">MKLLMLCREPRLYSCQRLKESAEDNGHQIDILDPNRCLLKLSKNAPHFELYYQVNSKSEPYLLPDYDAIIPRFGSTSTRMGCAVLRHFRTKNIFCLNDDVAFLKARDKWLSLQLLTEQGIAVPNSALSGAEFSATQAILQIQSPTILKTLHGSQGIGVILAENRKSAVSIMETLTQADVPLLMQDFIQEAQGTDIRCFVIGDKVVATMQRIGQEDEFRANFHRGGSAEKIQLTEQEKVLALKATKCLGLDVAGVDLIRSKQGLLVLEVNASPGLEMIEKTSGIDIALQMIVHIEKQFKR</sequence>
<accession>Q0I2X8</accession>
<dbReference type="EC" id="6.3.2.-" evidence="1"/>
<dbReference type="EMBL" id="CP000436">
    <property type="protein sequence ID" value="ABI24932.1"/>
    <property type="molecule type" value="Genomic_DNA"/>
</dbReference>
<dbReference type="SMR" id="Q0I2X8"/>
<dbReference type="DNASU" id="4240143"/>
<dbReference type="KEGG" id="hso:HS_0655"/>
<dbReference type="eggNOG" id="COG0189">
    <property type="taxonomic scope" value="Bacteria"/>
</dbReference>
<dbReference type="HOGENOM" id="CLU_054353_0_1_6"/>
<dbReference type="GO" id="GO:0005737">
    <property type="term" value="C:cytoplasm"/>
    <property type="evidence" value="ECO:0007669"/>
    <property type="project" value="TreeGrafter"/>
</dbReference>
<dbReference type="GO" id="GO:0005524">
    <property type="term" value="F:ATP binding"/>
    <property type="evidence" value="ECO:0007669"/>
    <property type="project" value="UniProtKB-UniRule"/>
</dbReference>
<dbReference type="GO" id="GO:0046872">
    <property type="term" value="F:metal ion binding"/>
    <property type="evidence" value="ECO:0007669"/>
    <property type="project" value="UniProtKB-KW"/>
</dbReference>
<dbReference type="GO" id="GO:0018169">
    <property type="term" value="F:ribosomal S6-glutamic acid ligase activity"/>
    <property type="evidence" value="ECO:0007669"/>
    <property type="project" value="TreeGrafter"/>
</dbReference>
<dbReference type="GO" id="GO:0036211">
    <property type="term" value="P:protein modification process"/>
    <property type="evidence" value="ECO:0007669"/>
    <property type="project" value="InterPro"/>
</dbReference>
<dbReference type="GO" id="GO:0009432">
    <property type="term" value="P:SOS response"/>
    <property type="evidence" value="ECO:0007669"/>
    <property type="project" value="TreeGrafter"/>
</dbReference>
<dbReference type="GO" id="GO:0006412">
    <property type="term" value="P:translation"/>
    <property type="evidence" value="ECO:0007669"/>
    <property type="project" value="UniProtKB-KW"/>
</dbReference>
<dbReference type="FunFam" id="3.30.470.20:FF:000058">
    <property type="entry name" value="Alpha-aminoadipate--LysW ligase LysX protein"/>
    <property type="match status" value="1"/>
</dbReference>
<dbReference type="Gene3D" id="3.40.50.20">
    <property type="match status" value="1"/>
</dbReference>
<dbReference type="Gene3D" id="3.30.1490.20">
    <property type="entry name" value="ATP-grasp fold, A domain"/>
    <property type="match status" value="1"/>
</dbReference>
<dbReference type="Gene3D" id="3.30.470.20">
    <property type="entry name" value="ATP-grasp fold, B domain"/>
    <property type="match status" value="1"/>
</dbReference>
<dbReference type="HAMAP" id="MF_01552">
    <property type="entry name" value="RimK"/>
    <property type="match status" value="1"/>
</dbReference>
<dbReference type="InterPro" id="IPR011761">
    <property type="entry name" value="ATP-grasp"/>
</dbReference>
<dbReference type="InterPro" id="IPR013651">
    <property type="entry name" value="ATP-grasp_RimK-type"/>
</dbReference>
<dbReference type="InterPro" id="IPR013815">
    <property type="entry name" value="ATP_grasp_subdomain_1"/>
</dbReference>
<dbReference type="InterPro" id="IPR023533">
    <property type="entry name" value="RimK"/>
</dbReference>
<dbReference type="InterPro" id="IPR041107">
    <property type="entry name" value="Rimk_N"/>
</dbReference>
<dbReference type="InterPro" id="IPR004666">
    <property type="entry name" value="Rp_bS6_RimK/Lys_biosynth_LsyX"/>
</dbReference>
<dbReference type="NCBIfam" id="TIGR00768">
    <property type="entry name" value="rimK_fam"/>
    <property type="match status" value="1"/>
</dbReference>
<dbReference type="PANTHER" id="PTHR21621:SF7">
    <property type="entry name" value="RIBOSOMAL PROTEIN BS6--L-GLUTAMATE LIGASE"/>
    <property type="match status" value="1"/>
</dbReference>
<dbReference type="PANTHER" id="PTHR21621">
    <property type="entry name" value="RIBOSOMAL PROTEIN S6 MODIFICATION PROTEIN"/>
    <property type="match status" value="1"/>
</dbReference>
<dbReference type="Pfam" id="PF08443">
    <property type="entry name" value="RimK"/>
    <property type="match status" value="1"/>
</dbReference>
<dbReference type="Pfam" id="PF18030">
    <property type="entry name" value="Rimk_N"/>
    <property type="match status" value="1"/>
</dbReference>
<dbReference type="SUPFAM" id="SSF56059">
    <property type="entry name" value="Glutathione synthetase ATP-binding domain-like"/>
    <property type="match status" value="1"/>
</dbReference>
<dbReference type="PROSITE" id="PS50975">
    <property type="entry name" value="ATP_GRASP"/>
    <property type="match status" value="1"/>
</dbReference>
<keyword id="KW-0067">ATP-binding</keyword>
<keyword id="KW-0436">Ligase</keyword>
<keyword id="KW-0460">Magnesium</keyword>
<keyword id="KW-0464">Manganese</keyword>
<keyword id="KW-0479">Metal-binding</keyword>
<keyword id="KW-0547">Nucleotide-binding</keyword>
<keyword id="KW-0648">Protein biosynthesis</keyword>
<name>RIMK_HISS1</name>
<proteinExistence type="inferred from homology"/>
<evidence type="ECO:0000255" key="1">
    <source>
        <dbReference type="HAMAP-Rule" id="MF_01552"/>
    </source>
</evidence>
<reference key="1">
    <citation type="journal article" date="2007" name="J. Bacteriol.">
        <title>Complete genome sequence of Haemophilus somnus (Histophilus somni) strain 129Pt and comparison to Haemophilus ducreyi 35000HP and Haemophilus influenzae Rd.</title>
        <authorList>
            <person name="Challacombe J.F."/>
            <person name="Duncan A.J."/>
            <person name="Brettin T.S."/>
            <person name="Bruce D."/>
            <person name="Chertkov O."/>
            <person name="Detter J.C."/>
            <person name="Han C.S."/>
            <person name="Misra M."/>
            <person name="Richardson P."/>
            <person name="Tapia R."/>
            <person name="Thayer N."/>
            <person name="Xie G."/>
            <person name="Inzana T.J."/>
        </authorList>
    </citation>
    <scope>NUCLEOTIDE SEQUENCE [LARGE SCALE GENOMIC DNA]</scope>
    <source>
        <strain>129Pt</strain>
    </source>
</reference>
<comment type="cofactor">
    <cofactor evidence="1">
        <name>Mg(2+)</name>
        <dbReference type="ChEBI" id="CHEBI:18420"/>
    </cofactor>
    <cofactor evidence="1">
        <name>Mn(2+)</name>
        <dbReference type="ChEBI" id="CHEBI:29035"/>
    </cofactor>
    <text evidence="1">Binds 2 magnesium or manganese ions per subunit.</text>
</comment>
<comment type="similarity">
    <text evidence="1">Belongs to the RimK family.</text>
</comment>
<protein>
    <recommendedName>
        <fullName evidence="1">Probable alpha-L-glutamate ligase</fullName>
        <ecNumber evidence="1">6.3.2.-</ecNumber>
    </recommendedName>
</protein>
<organism>
    <name type="scientific">Histophilus somni (strain 129Pt)</name>
    <name type="common">Haemophilus somnus</name>
    <dbReference type="NCBI Taxonomy" id="205914"/>
    <lineage>
        <taxon>Bacteria</taxon>
        <taxon>Pseudomonadati</taxon>
        <taxon>Pseudomonadota</taxon>
        <taxon>Gammaproteobacteria</taxon>
        <taxon>Pasteurellales</taxon>
        <taxon>Pasteurellaceae</taxon>
        <taxon>Histophilus</taxon>
    </lineage>
</organism>
<gene>
    <name evidence="1" type="primary">rimK</name>
    <name type="ordered locus">HS_0655</name>
</gene>
<feature type="chain" id="PRO_1000068842" description="Probable alpha-L-glutamate ligase">
    <location>
        <begin position="1"/>
        <end position="299"/>
    </location>
</feature>
<feature type="domain" description="ATP-grasp" evidence="1">
    <location>
        <begin position="112"/>
        <end position="294"/>
    </location>
</feature>
<feature type="binding site" evidence="1">
    <location>
        <position position="148"/>
    </location>
    <ligand>
        <name>ATP</name>
        <dbReference type="ChEBI" id="CHEBI:30616"/>
    </ligand>
</feature>
<feature type="binding site" evidence="1">
    <location>
        <begin position="185"/>
        <end position="186"/>
    </location>
    <ligand>
        <name>ATP</name>
        <dbReference type="ChEBI" id="CHEBI:30616"/>
    </ligand>
</feature>
<feature type="binding site" evidence="1">
    <location>
        <position position="194"/>
    </location>
    <ligand>
        <name>ATP</name>
        <dbReference type="ChEBI" id="CHEBI:30616"/>
    </ligand>
</feature>
<feature type="binding site" evidence="1">
    <location>
        <begin position="218"/>
        <end position="220"/>
    </location>
    <ligand>
        <name>ATP</name>
        <dbReference type="ChEBI" id="CHEBI:30616"/>
    </ligand>
</feature>
<feature type="binding site" evidence="1">
    <location>
        <position position="255"/>
    </location>
    <ligand>
        <name>Mg(2+)</name>
        <dbReference type="ChEBI" id="CHEBI:18420"/>
        <label>1</label>
    </ligand>
</feature>
<feature type="binding site" evidence="1">
    <location>
        <position position="255"/>
    </location>
    <ligand>
        <name>Mn(2+)</name>
        <dbReference type="ChEBI" id="CHEBI:29035"/>
        <label>1</label>
    </ligand>
</feature>
<feature type="binding site" evidence="1">
    <location>
        <position position="267"/>
    </location>
    <ligand>
        <name>Mg(2+)</name>
        <dbReference type="ChEBI" id="CHEBI:18420"/>
        <label>1</label>
    </ligand>
</feature>
<feature type="binding site" evidence="1">
    <location>
        <position position="267"/>
    </location>
    <ligand>
        <name>Mg(2+)</name>
        <dbReference type="ChEBI" id="CHEBI:18420"/>
        <label>2</label>
    </ligand>
</feature>
<feature type="binding site" evidence="1">
    <location>
        <position position="267"/>
    </location>
    <ligand>
        <name>Mn(2+)</name>
        <dbReference type="ChEBI" id="CHEBI:29035"/>
        <label>1</label>
    </ligand>
</feature>
<feature type="binding site" evidence="1">
    <location>
        <position position="267"/>
    </location>
    <ligand>
        <name>Mn(2+)</name>
        <dbReference type="ChEBI" id="CHEBI:29035"/>
        <label>2</label>
    </ligand>
</feature>
<feature type="binding site" evidence="1">
    <location>
        <position position="269"/>
    </location>
    <ligand>
        <name>Mg(2+)</name>
        <dbReference type="ChEBI" id="CHEBI:18420"/>
        <label>2</label>
    </ligand>
</feature>
<feature type="binding site" evidence="1">
    <location>
        <position position="269"/>
    </location>
    <ligand>
        <name>Mn(2+)</name>
        <dbReference type="ChEBI" id="CHEBI:29035"/>
        <label>2</label>
    </ligand>
</feature>